<reference key="1">
    <citation type="journal article" date="2002" name="Proc. Natl. Acad. Sci. U.S.A.">
        <title>The Brucella suis genome reveals fundamental similarities between animal and plant pathogens and symbionts.</title>
        <authorList>
            <person name="Paulsen I.T."/>
            <person name="Seshadri R."/>
            <person name="Nelson K.E."/>
            <person name="Eisen J.A."/>
            <person name="Heidelberg J.F."/>
            <person name="Read T.D."/>
            <person name="Dodson R.J."/>
            <person name="Umayam L.A."/>
            <person name="Brinkac L.M."/>
            <person name="Beanan M.J."/>
            <person name="Daugherty S.C."/>
            <person name="DeBoy R.T."/>
            <person name="Durkin A.S."/>
            <person name="Kolonay J.F."/>
            <person name="Madupu R."/>
            <person name="Nelson W.C."/>
            <person name="Ayodeji B."/>
            <person name="Kraul M."/>
            <person name="Shetty J."/>
            <person name="Malek J.A."/>
            <person name="Van Aken S.E."/>
            <person name="Riedmuller S."/>
            <person name="Tettelin H."/>
            <person name="Gill S.R."/>
            <person name="White O."/>
            <person name="Salzberg S.L."/>
            <person name="Hoover D.L."/>
            <person name="Lindler L.E."/>
            <person name="Halling S.M."/>
            <person name="Boyle S.M."/>
            <person name="Fraser C.M."/>
        </authorList>
    </citation>
    <scope>NUCLEOTIDE SEQUENCE [LARGE SCALE GENOMIC DNA]</scope>
    <source>
        <strain>1330</strain>
    </source>
</reference>
<reference key="2">
    <citation type="journal article" date="2011" name="J. Bacteriol.">
        <title>Revised genome sequence of Brucella suis 1330.</title>
        <authorList>
            <person name="Tae H."/>
            <person name="Shallom S."/>
            <person name="Settlage R."/>
            <person name="Preston D."/>
            <person name="Adams L.G."/>
            <person name="Garner H.R."/>
        </authorList>
    </citation>
    <scope>NUCLEOTIDE SEQUENCE [LARGE SCALE GENOMIC DNA]</scope>
    <source>
        <strain>1330</strain>
    </source>
</reference>
<gene>
    <name evidence="1" type="primary">apaG</name>
    <name type="ordered locus">BR0304</name>
    <name type="ordered locus">BS1330_I0305</name>
</gene>
<evidence type="ECO:0000255" key="1">
    <source>
        <dbReference type="HAMAP-Rule" id="MF_00791"/>
    </source>
</evidence>
<organism>
    <name type="scientific">Brucella suis biovar 1 (strain 1330)</name>
    <dbReference type="NCBI Taxonomy" id="204722"/>
    <lineage>
        <taxon>Bacteria</taxon>
        <taxon>Pseudomonadati</taxon>
        <taxon>Pseudomonadota</taxon>
        <taxon>Alphaproteobacteria</taxon>
        <taxon>Hyphomicrobiales</taxon>
        <taxon>Brucellaceae</taxon>
        <taxon>Brucella/Ochrobactrum group</taxon>
        <taxon>Brucella</taxon>
    </lineage>
</organism>
<dbReference type="EMBL" id="AE014291">
    <property type="protein sequence ID" value="AAN29253.1"/>
    <property type="molecule type" value="Genomic_DNA"/>
</dbReference>
<dbReference type="EMBL" id="CP002997">
    <property type="protein sequence ID" value="AEM17666.1"/>
    <property type="molecule type" value="Genomic_DNA"/>
</dbReference>
<dbReference type="RefSeq" id="WP_006189810.1">
    <property type="nucleotide sequence ID" value="NZ_KN046804.1"/>
</dbReference>
<dbReference type="SMR" id="Q8G2L5"/>
<dbReference type="GeneID" id="45051434"/>
<dbReference type="KEGG" id="bms:BR0304"/>
<dbReference type="KEGG" id="bsi:BS1330_I0305"/>
<dbReference type="PATRIC" id="fig|204722.21.peg.1791"/>
<dbReference type="HOGENOM" id="CLU_128074_1_0_5"/>
<dbReference type="PhylomeDB" id="Q8G2L5"/>
<dbReference type="Proteomes" id="UP000007104">
    <property type="component" value="Chromosome I"/>
</dbReference>
<dbReference type="GO" id="GO:0070987">
    <property type="term" value="P:error-free translesion synthesis"/>
    <property type="evidence" value="ECO:0007669"/>
    <property type="project" value="TreeGrafter"/>
</dbReference>
<dbReference type="Gene3D" id="2.60.40.1470">
    <property type="entry name" value="ApaG domain"/>
    <property type="match status" value="1"/>
</dbReference>
<dbReference type="HAMAP" id="MF_00791">
    <property type="entry name" value="ApaG"/>
    <property type="match status" value="1"/>
</dbReference>
<dbReference type="InterPro" id="IPR007474">
    <property type="entry name" value="ApaG_domain"/>
</dbReference>
<dbReference type="InterPro" id="IPR036767">
    <property type="entry name" value="ApaG_sf"/>
</dbReference>
<dbReference type="InterPro" id="IPR023065">
    <property type="entry name" value="Uncharacterised_ApaG"/>
</dbReference>
<dbReference type="NCBIfam" id="NF003967">
    <property type="entry name" value="PRK05461.1"/>
    <property type="match status" value="1"/>
</dbReference>
<dbReference type="PANTHER" id="PTHR14289">
    <property type="entry name" value="F-BOX ONLY PROTEIN 3"/>
    <property type="match status" value="1"/>
</dbReference>
<dbReference type="PANTHER" id="PTHR14289:SF16">
    <property type="entry name" value="POLYMERASE DELTA-INTERACTING PROTEIN 2"/>
    <property type="match status" value="1"/>
</dbReference>
<dbReference type="Pfam" id="PF04379">
    <property type="entry name" value="DUF525"/>
    <property type="match status" value="1"/>
</dbReference>
<dbReference type="SUPFAM" id="SSF110069">
    <property type="entry name" value="ApaG-like"/>
    <property type="match status" value="1"/>
</dbReference>
<dbReference type="PROSITE" id="PS51087">
    <property type="entry name" value="APAG"/>
    <property type="match status" value="1"/>
</dbReference>
<accession>Q8G2L5</accession>
<accession>G0K660</accession>
<feature type="chain" id="PRO_0000197943" description="Protein ApaG">
    <location>
        <begin position="1"/>
        <end position="130"/>
    </location>
</feature>
<feature type="domain" description="ApaG" evidence="1">
    <location>
        <begin position="3"/>
        <end position="127"/>
    </location>
</feature>
<name>APAG_BRUSU</name>
<protein>
    <recommendedName>
        <fullName evidence="1">Protein ApaG</fullName>
    </recommendedName>
</protein>
<sequence length="130" mass="14519">MYSAVTRGIEVTVEPFYLEVQSEPEENRYVWGYRVTIVNNSSETVQLCSRYWQITDANGHVQEVRGSGVVGEQPVLDPGASYQYSSGCPLTTSSGVMVGRYQMKGEDGAQFEIEIPAFSLDVPEQRRTLN</sequence>
<proteinExistence type="inferred from homology"/>